<accession>Q57300</accession>
<sequence>MKLSPKAAIEVCNEAAKKGLWILGIDGGHWLNPGFRIDSSASWTYDMPEEYKSKTPENNRLAIENIKDDIENGYTAFIITLKM</sequence>
<dbReference type="EMBL" id="X15858">
    <property type="protein sequence ID" value="CAA33865.1"/>
    <property type="molecule type" value="Genomic_DNA"/>
</dbReference>
<dbReference type="EMBL" id="M16803">
    <property type="protein sequence ID" value="AAA23078.1"/>
    <property type="molecule type" value="Genomic_DNA"/>
</dbReference>
<dbReference type="PIR" id="B32535">
    <property type="entry name" value="B32535"/>
</dbReference>
<dbReference type="RefSeq" id="YP_002533539.1">
    <property type="nucleotide sequence ID" value="NC_011977.1"/>
</dbReference>
<dbReference type="SMR" id="Q57300"/>
<dbReference type="GO" id="GO:0030153">
    <property type="term" value="P:bacteriocin immunity"/>
    <property type="evidence" value="ECO:0007669"/>
    <property type="project" value="UniProtKB-KW"/>
</dbReference>
<dbReference type="Gene3D" id="3.30.190.30">
    <property type="match status" value="1"/>
</dbReference>
<dbReference type="InterPro" id="IPR020127">
    <property type="entry name" value="Colicin-E5_imm"/>
</dbReference>
<dbReference type="InterPro" id="IPR037234">
    <property type="entry name" value="ImmE5_sf"/>
</dbReference>
<dbReference type="Pfam" id="PF11480">
    <property type="entry name" value="ImmE5"/>
    <property type="match status" value="1"/>
</dbReference>
<dbReference type="SUPFAM" id="SSF143469">
    <property type="entry name" value="ImmE5-like"/>
    <property type="match status" value="1"/>
</dbReference>
<proteinExistence type="predicted"/>
<feature type="chain" id="PRO_0000218706" description="Colicin-E5 immunity protein in ColE9">
    <location>
        <begin position="1"/>
        <end position="83"/>
    </location>
</feature>
<keyword id="KW-0079">Bacteriocin immunity</keyword>
<keyword id="KW-0614">Plasmid</keyword>
<protein>
    <recommendedName>
        <fullName>Colicin-E5 immunity protein in ColE9</fullName>
        <shortName>E5Imm[E9]</shortName>
    </recommendedName>
</protein>
<reference key="1">
    <citation type="journal article" date="1989" name="Mol. Gen. Genet.">
        <title>Nucleotide sequences from the colicin E5, E6 and E9 operons: presence of a degenerate transposon-like structure in the ColE9-J plasmid.</title>
        <authorList>
            <person name="Lau P.C.K."/>
            <person name="Condie J.A."/>
        </authorList>
    </citation>
    <scope>NUCLEOTIDE SEQUENCE [GENOMIC DNA]</scope>
</reference>
<reference key="2">
    <citation type="journal article" date="1987" name="J. Gen. Microbiol.">
        <title>Nucleotide sequence of the immunity and lysis region of the ColE9-J plasmid.</title>
        <authorList>
            <person name="James R."/>
            <person name="Jarvis M."/>
            <person name="Barker D.F."/>
        </authorList>
    </citation>
    <scope>NUCLEOTIDE SEQUENCE [GENOMIC DNA]</scope>
</reference>
<organism>
    <name type="scientific">Escherichia coli</name>
    <dbReference type="NCBI Taxonomy" id="562"/>
    <lineage>
        <taxon>Bacteria</taxon>
        <taxon>Pseudomonadati</taxon>
        <taxon>Pseudomonadota</taxon>
        <taxon>Gammaproteobacteria</taxon>
        <taxon>Enterobacterales</taxon>
        <taxon>Enterobacteriaceae</taxon>
        <taxon>Escherichia</taxon>
    </lineage>
</organism>
<name>IMMY_ECOLX</name>
<geneLocation type="plasmid">
    <name>ColE9-J</name>
</geneLocation>